<sequence length="304" mass="33122">MARTENDTWDLASSVGATATMVAAARALATNADEPAIDDPFAAPLVRAVGVDFFTKLVDDNFDLTALDPEAAEGLTRFANGMAARTRFFDDFFLDAARAGVRQFVILASGLDARAYRLPWPAGSVVFEIDQPDVIEFKTKALADLGALPTTDRRAVAVDLRFDWPAALTEAGFDPAEPTAWIAEGLLGYLPPEAQDRLLDQIAELSAPGSRVAVEEIPAIEEEDHEEIAARMKDFSDRWRAHGFDLDFTELVFLGDRADVSSYLQGHGWKTTSMTSDELLVHNGLPRVDDDAQIGSVVYVTATR</sequence>
<reference key="1">
    <citation type="submission" date="2006-10" db="EMBL/GenBank/DDBJ databases">
        <authorList>
            <person name="Fleischmann R.D."/>
            <person name="Dodson R.J."/>
            <person name="Haft D.H."/>
            <person name="Merkel J.S."/>
            <person name="Nelson W.C."/>
            <person name="Fraser C.M."/>
        </authorList>
    </citation>
    <scope>NUCLEOTIDE SEQUENCE [LARGE SCALE GENOMIC DNA]</scope>
    <source>
        <strain>ATCC 700084 / mc(2)155</strain>
    </source>
</reference>
<reference key="2">
    <citation type="journal article" date="2007" name="Genome Biol.">
        <title>Interrupted coding sequences in Mycobacterium smegmatis: authentic mutations or sequencing errors?</title>
        <authorList>
            <person name="Deshayes C."/>
            <person name="Perrodou E."/>
            <person name="Gallien S."/>
            <person name="Euphrasie D."/>
            <person name="Schaeffer C."/>
            <person name="Van-Dorsselaer A."/>
            <person name="Poch O."/>
            <person name="Lecompte O."/>
            <person name="Reyrat J.-M."/>
        </authorList>
    </citation>
    <scope>NUCLEOTIDE SEQUENCE [LARGE SCALE GENOMIC DNA]</scope>
    <source>
        <strain>ATCC 700084 / mc(2)155</strain>
    </source>
</reference>
<reference key="3">
    <citation type="journal article" date="2009" name="Genome Res.">
        <title>Ortho-proteogenomics: multiple proteomes investigation through orthology and a new MS-based protocol.</title>
        <authorList>
            <person name="Gallien S."/>
            <person name="Perrodou E."/>
            <person name="Carapito C."/>
            <person name="Deshayes C."/>
            <person name="Reyrat J.-M."/>
            <person name="Van Dorsselaer A."/>
            <person name="Poch O."/>
            <person name="Schaeffer C."/>
            <person name="Lecompte O."/>
        </authorList>
    </citation>
    <scope>NUCLEOTIDE SEQUENCE [LARGE SCALE GENOMIC DNA]</scope>
    <source>
        <strain>ATCC 700084 / mc(2)155</strain>
    </source>
</reference>
<keyword id="KW-0489">Methyltransferase</keyword>
<keyword id="KW-1185">Reference proteome</keyword>
<keyword id="KW-0949">S-adenosyl-L-methionine</keyword>
<keyword id="KW-0808">Transferase</keyword>
<proteinExistence type="inferred from homology"/>
<comment type="function">
    <text evidence="1">Exhibits S-adenosyl-L-methionine-dependent methyltransferase activity.</text>
</comment>
<comment type="similarity">
    <text evidence="2">Belongs to the UPF0677 family.</text>
</comment>
<accession>A0QSH6</accession>
<accession>I7G5Q9</accession>
<evidence type="ECO:0000250" key="1"/>
<evidence type="ECO:0000305" key="2"/>
<organism>
    <name type="scientific">Mycolicibacterium smegmatis (strain ATCC 700084 / mc(2)155)</name>
    <name type="common">Mycobacterium smegmatis</name>
    <dbReference type="NCBI Taxonomy" id="246196"/>
    <lineage>
        <taxon>Bacteria</taxon>
        <taxon>Bacillati</taxon>
        <taxon>Actinomycetota</taxon>
        <taxon>Actinomycetes</taxon>
        <taxon>Mycobacteriales</taxon>
        <taxon>Mycobacteriaceae</taxon>
        <taxon>Mycolicibacterium</taxon>
    </lineage>
</organism>
<dbReference type="EC" id="2.1.1.-"/>
<dbReference type="EMBL" id="CP000480">
    <property type="protein sequence ID" value="ABK70915.1"/>
    <property type="molecule type" value="Genomic_DNA"/>
</dbReference>
<dbReference type="EMBL" id="CP001663">
    <property type="protein sequence ID" value="AFP37919.1"/>
    <property type="molecule type" value="Genomic_DNA"/>
</dbReference>
<dbReference type="RefSeq" id="WP_003892869.1">
    <property type="nucleotide sequence ID" value="NZ_SIJM01000016.1"/>
</dbReference>
<dbReference type="RefSeq" id="YP_885864.1">
    <property type="nucleotide sequence ID" value="NC_008596.1"/>
</dbReference>
<dbReference type="SMR" id="A0QSH6"/>
<dbReference type="STRING" id="246196.MSMEG_1482"/>
<dbReference type="PaxDb" id="246196-MSMEI_1446"/>
<dbReference type="KEGG" id="msb:LJ00_07405"/>
<dbReference type="KEGG" id="msg:MSMEI_1446"/>
<dbReference type="KEGG" id="msm:MSMEG_1482"/>
<dbReference type="PATRIC" id="fig|246196.19.peg.1467"/>
<dbReference type="eggNOG" id="COG3315">
    <property type="taxonomic scope" value="Bacteria"/>
</dbReference>
<dbReference type="OrthoDB" id="9806164at2"/>
<dbReference type="Proteomes" id="UP000000757">
    <property type="component" value="Chromosome"/>
</dbReference>
<dbReference type="Proteomes" id="UP000006158">
    <property type="component" value="Chromosome"/>
</dbReference>
<dbReference type="GO" id="GO:0008168">
    <property type="term" value="F:methyltransferase activity"/>
    <property type="evidence" value="ECO:0007669"/>
    <property type="project" value="UniProtKB-KW"/>
</dbReference>
<dbReference type="GO" id="GO:0032259">
    <property type="term" value="P:methylation"/>
    <property type="evidence" value="ECO:0007669"/>
    <property type="project" value="UniProtKB-KW"/>
</dbReference>
<dbReference type="FunFam" id="3.40.50.150:FF:000152">
    <property type="entry name" value="S-adenosyl-L-methionine-dependent methyltransferase"/>
    <property type="match status" value="1"/>
</dbReference>
<dbReference type="Gene3D" id="3.40.50.150">
    <property type="entry name" value="Vaccinia Virus protein VP39"/>
    <property type="match status" value="1"/>
</dbReference>
<dbReference type="InterPro" id="IPR007213">
    <property type="entry name" value="Ppm1/Ppm2/Tcmp"/>
</dbReference>
<dbReference type="InterPro" id="IPR029063">
    <property type="entry name" value="SAM-dependent_MTases_sf"/>
</dbReference>
<dbReference type="InterPro" id="IPR011610">
    <property type="entry name" value="SAM_mthyl_Trfase_ML2640-like"/>
</dbReference>
<dbReference type="NCBIfam" id="TIGR00027">
    <property type="entry name" value="mthyl_TIGR00027"/>
    <property type="match status" value="1"/>
</dbReference>
<dbReference type="PANTHER" id="PTHR43619">
    <property type="entry name" value="S-ADENOSYL-L-METHIONINE-DEPENDENT METHYLTRANSFERASE YKTD-RELATED"/>
    <property type="match status" value="1"/>
</dbReference>
<dbReference type="PANTHER" id="PTHR43619:SF2">
    <property type="entry name" value="S-ADENOSYL-L-METHIONINE-DEPENDENT METHYLTRANSFERASES SUPERFAMILY PROTEIN"/>
    <property type="match status" value="1"/>
</dbReference>
<dbReference type="Pfam" id="PF04072">
    <property type="entry name" value="LCM"/>
    <property type="match status" value="1"/>
</dbReference>
<dbReference type="SUPFAM" id="SSF53335">
    <property type="entry name" value="S-adenosyl-L-methionine-dependent methyltransferases"/>
    <property type="match status" value="1"/>
</dbReference>
<name>Y1482_MYCS2</name>
<protein>
    <recommendedName>
        <fullName>Putative S-adenosyl-L-methionine-dependent methyltransferase MSMEG_1482/MSMEI_1446</fullName>
        <ecNumber>2.1.1.-</ecNumber>
    </recommendedName>
</protein>
<feature type="chain" id="PRO_0000361198" description="Putative S-adenosyl-L-methionine-dependent methyltransferase MSMEG_1482/MSMEI_1446">
    <location>
        <begin position="1"/>
        <end position="304"/>
    </location>
</feature>
<feature type="binding site" evidence="1">
    <location>
        <position position="130"/>
    </location>
    <ligand>
        <name>S-adenosyl-L-methionine</name>
        <dbReference type="ChEBI" id="CHEBI:59789"/>
    </ligand>
</feature>
<feature type="binding site" evidence="1">
    <location>
        <begin position="159"/>
        <end position="160"/>
    </location>
    <ligand>
        <name>S-adenosyl-L-methionine</name>
        <dbReference type="ChEBI" id="CHEBI:59789"/>
    </ligand>
</feature>
<gene>
    <name type="ordered locus">MSMEG_1482</name>
    <name type="ordered locus">MSMEI_1446</name>
</gene>